<reference key="1">
    <citation type="journal article" date="2003" name="Proc. Natl. Acad. Sci. U.S.A.">
        <title>The complete genome sequence of the carcinogenic bacterium Helicobacter hepaticus.</title>
        <authorList>
            <person name="Suerbaum S."/>
            <person name="Josenhans C."/>
            <person name="Sterzenbach T."/>
            <person name="Drescher B."/>
            <person name="Brandt P."/>
            <person name="Bell M."/>
            <person name="Droege M."/>
            <person name="Fartmann B."/>
            <person name="Fischer H.-P."/>
            <person name="Ge Z."/>
            <person name="Hoerster A."/>
            <person name="Holland R."/>
            <person name="Klein K."/>
            <person name="Koenig J."/>
            <person name="Macko L."/>
            <person name="Mendz G.L."/>
            <person name="Nyakatura G."/>
            <person name="Schauer D.B."/>
            <person name="Shen Z."/>
            <person name="Weber J."/>
            <person name="Frosch M."/>
            <person name="Fox J.G."/>
        </authorList>
    </citation>
    <scope>NUCLEOTIDE SEQUENCE [LARGE SCALE GENOMIC DNA]</scope>
    <source>
        <strain>ATCC 51449 / 3B1</strain>
    </source>
</reference>
<name>LOLA_HELHP</name>
<evidence type="ECO:0000255" key="1">
    <source>
        <dbReference type="HAMAP-Rule" id="MF_00240"/>
    </source>
</evidence>
<keyword id="KW-0143">Chaperone</keyword>
<keyword id="KW-0574">Periplasm</keyword>
<keyword id="KW-0653">Protein transport</keyword>
<keyword id="KW-1185">Reference proteome</keyword>
<keyword id="KW-0732">Signal</keyword>
<keyword id="KW-0813">Transport</keyword>
<dbReference type="EMBL" id="AE017125">
    <property type="protein sequence ID" value="AAP76913.1"/>
    <property type="molecule type" value="Genomic_DNA"/>
</dbReference>
<dbReference type="RefSeq" id="WP_011115159.1">
    <property type="nucleotide sequence ID" value="NC_004917.1"/>
</dbReference>
<dbReference type="SMR" id="Q7VJC7"/>
<dbReference type="STRING" id="235279.HH_0316"/>
<dbReference type="KEGG" id="hhe:HH_0316"/>
<dbReference type="eggNOG" id="COG2834">
    <property type="taxonomic scope" value="Bacteria"/>
</dbReference>
<dbReference type="HOGENOM" id="CLU_125914_0_0_7"/>
<dbReference type="OrthoDB" id="5339202at2"/>
<dbReference type="Proteomes" id="UP000002495">
    <property type="component" value="Chromosome"/>
</dbReference>
<dbReference type="GO" id="GO:0042597">
    <property type="term" value="C:periplasmic space"/>
    <property type="evidence" value="ECO:0007669"/>
    <property type="project" value="UniProtKB-SubCell"/>
</dbReference>
<dbReference type="GO" id="GO:0042953">
    <property type="term" value="P:lipoprotein transport"/>
    <property type="evidence" value="ECO:0007669"/>
    <property type="project" value="InterPro"/>
</dbReference>
<dbReference type="CDD" id="cd16325">
    <property type="entry name" value="LolA"/>
    <property type="match status" value="1"/>
</dbReference>
<dbReference type="Gene3D" id="2.50.20.10">
    <property type="entry name" value="Lipoprotein localisation LolA/LolB/LppX"/>
    <property type="match status" value="1"/>
</dbReference>
<dbReference type="HAMAP" id="MF_00240">
    <property type="entry name" value="LolA"/>
    <property type="match status" value="1"/>
</dbReference>
<dbReference type="InterPro" id="IPR029046">
    <property type="entry name" value="LolA/LolB/LppX"/>
</dbReference>
<dbReference type="InterPro" id="IPR004564">
    <property type="entry name" value="OM_lipoprot_carrier_LolA-like"/>
</dbReference>
<dbReference type="InterPro" id="IPR018323">
    <property type="entry name" value="OM_lipoprot_carrier_LolA_Pbac"/>
</dbReference>
<dbReference type="NCBIfam" id="NF000663">
    <property type="entry name" value="PRK00031.2-1"/>
    <property type="match status" value="1"/>
</dbReference>
<dbReference type="NCBIfam" id="NF000664">
    <property type="entry name" value="PRK00031.2-2"/>
    <property type="match status" value="1"/>
</dbReference>
<dbReference type="PANTHER" id="PTHR35869">
    <property type="entry name" value="OUTER-MEMBRANE LIPOPROTEIN CARRIER PROTEIN"/>
    <property type="match status" value="1"/>
</dbReference>
<dbReference type="PANTHER" id="PTHR35869:SF1">
    <property type="entry name" value="OUTER-MEMBRANE LIPOPROTEIN CARRIER PROTEIN"/>
    <property type="match status" value="1"/>
</dbReference>
<dbReference type="Pfam" id="PF03548">
    <property type="entry name" value="LolA"/>
    <property type="match status" value="1"/>
</dbReference>
<dbReference type="SUPFAM" id="SSF89392">
    <property type="entry name" value="Prokaryotic lipoproteins and lipoprotein localization factors"/>
    <property type="match status" value="1"/>
</dbReference>
<feature type="signal peptide" evidence="1">
    <location>
        <begin position="1"/>
        <end position="22"/>
    </location>
</feature>
<feature type="chain" id="PRO_0000018261" description="Outer-membrane lipoprotein carrier protein">
    <location>
        <begin position="23"/>
        <end position="179"/>
    </location>
</feature>
<accession>Q7VJC7</accession>
<gene>
    <name evidence="1" type="primary">lolA</name>
    <name type="ordered locus">HH_0316</name>
</gene>
<comment type="function">
    <text evidence="1">Participates in the translocation of lipoproteins from the inner membrane to the outer membrane. Only forms a complex with a lipoprotein if the residue after the N-terminal Cys is not an aspartate (The Asp acts as a targeting signal to indicate that the lipoprotein should stay in the inner membrane).</text>
</comment>
<comment type="subunit">
    <text evidence="1">Monomer.</text>
</comment>
<comment type="subcellular location">
    <subcellularLocation>
        <location evidence="1">Periplasm</location>
    </subcellularLocation>
</comment>
<comment type="similarity">
    <text evidence="1">Belongs to the LolA family.</text>
</comment>
<sequence length="179" mass="20679">MEVLRRYVLVFTSLCMTLFAWGENLQSIEADFEQIAVNEDGVPTRYEGHIIGKMPSKVKWDYKAPLQKEIYMNKNEVIMYEPRLEQVSHSRLKDKADFLSILKSAKKHNDGTYHTKVDGIEYVLFIDKAQKPERIEFVDSMGVKTTLKLKNVKLNGAISDKKFVFVPPQGVEIVELHSR</sequence>
<proteinExistence type="inferred from homology"/>
<protein>
    <recommendedName>
        <fullName evidence="1">Outer-membrane lipoprotein carrier protein</fullName>
    </recommendedName>
</protein>
<organism>
    <name type="scientific">Helicobacter hepaticus (strain ATCC 51449 / 3B1)</name>
    <dbReference type="NCBI Taxonomy" id="235279"/>
    <lineage>
        <taxon>Bacteria</taxon>
        <taxon>Pseudomonadati</taxon>
        <taxon>Campylobacterota</taxon>
        <taxon>Epsilonproteobacteria</taxon>
        <taxon>Campylobacterales</taxon>
        <taxon>Helicobacteraceae</taxon>
        <taxon>Helicobacter</taxon>
    </lineage>
</organism>